<sequence length="257" mass="27738">MFKRVLLKLSGEFLSGPAPDGSAGFGISPDTTAQLARLITDALTGTNVELAIVIGGGNLWRGARNGKGMDAATADYIGMLGTVMNAMALQDAMEAAGQPTRVMTAIQMAAVAEPYIRRRAIRHLEKGRVVIFGGGNGAPFFTTDTTATLRALEIGADVVLMAKNKVDGVYDSDPRKNPDARRLDSLTHIEVVERRLEVMDATALTLCMDKGLPIVVFDLFQPGNLRRLLEGERVGTLIESERRPERLSHDPSSHVPR</sequence>
<feature type="chain" id="PRO_0000323835" description="Uridylate kinase">
    <location>
        <begin position="1"/>
        <end position="257"/>
    </location>
</feature>
<feature type="region of interest" description="Involved in allosteric activation by GTP" evidence="1">
    <location>
        <begin position="21"/>
        <end position="26"/>
    </location>
</feature>
<feature type="binding site" evidence="1">
    <location>
        <begin position="8"/>
        <end position="11"/>
    </location>
    <ligand>
        <name>ATP</name>
        <dbReference type="ChEBI" id="CHEBI:30616"/>
    </ligand>
</feature>
<feature type="binding site" evidence="1">
    <location>
        <position position="56"/>
    </location>
    <ligand>
        <name>UMP</name>
        <dbReference type="ChEBI" id="CHEBI:57865"/>
    </ligand>
</feature>
<feature type="binding site" evidence="1">
    <location>
        <position position="57"/>
    </location>
    <ligand>
        <name>ATP</name>
        <dbReference type="ChEBI" id="CHEBI:30616"/>
    </ligand>
</feature>
<feature type="binding site" evidence="1">
    <location>
        <position position="61"/>
    </location>
    <ligand>
        <name>ATP</name>
        <dbReference type="ChEBI" id="CHEBI:30616"/>
    </ligand>
</feature>
<feature type="binding site" evidence="1">
    <location>
        <position position="75"/>
    </location>
    <ligand>
        <name>UMP</name>
        <dbReference type="ChEBI" id="CHEBI:57865"/>
    </ligand>
</feature>
<feature type="binding site" evidence="1">
    <location>
        <begin position="136"/>
        <end position="143"/>
    </location>
    <ligand>
        <name>UMP</name>
        <dbReference type="ChEBI" id="CHEBI:57865"/>
    </ligand>
</feature>
<feature type="binding site" evidence="1">
    <location>
        <position position="164"/>
    </location>
    <ligand>
        <name>ATP</name>
        <dbReference type="ChEBI" id="CHEBI:30616"/>
    </ligand>
</feature>
<feature type="binding site" evidence="1">
    <location>
        <position position="170"/>
    </location>
    <ligand>
        <name>ATP</name>
        <dbReference type="ChEBI" id="CHEBI:30616"/>
    </ligand>
</feature>
<feature type="binding site" evidence="1">
    <location>
        <position position="173"/>
    </location>
    <ligand>
        <name>ATP</name>
        <dbReference type="ChEBI" id="CHEBI:30616"/>
    </ligand>
</feature>
<keyword id="KW-0021">Allosteric enzyme</keyword>
<keyword id="KW-0067">ATP-binding</keyword>
<keyword id="KW-0963">Cytoplasm</keyword>
<keyword id="KW-0418">Kinase</keyword>
<keyword id="KW-0547">Nucleotide-binding</keyword>
<keyword id="KW-0665">Pyrimidine biosynthesis</keyword>
<keyword id="KW-0808">Transferase</keyword>
<accession>Q1IZI8</accession>
<name>PYRH_DEIGD</name>
<protein>
    <recommendedName>
        <fullName evidence="1">Uridylate kinase</fullName>
        <shortName evidence="1">UK</shortName>
        <ecNumber evidence="1">2.7.4.22</ecNumber>
    </recommendedName>
    <alternativeName>
        <fullName evidence="1">Uridine monophosphate kinase</fullName>
        <shortName evidence="1">UMP kinase</shortName>
        <shortName evidence="1">UMPK</shortName>
    </alternativeName>
</protein>
<proteinExistence type="inferred from homology"/>
<organism>
    <name type="scientific">Deinococcus geothermalis (strain DSM 11300 / CIP 105573 / AG-3a)</name>
    <dbReference type="NCBI Taxonomy" id="319795"/>
    <lineage>
        <taxon>Bacteria</taxon>
        <taxon>Thermotogati</taxon>
        <taxon>Deinococcota</taxon>
        <taxon>Deinococci</taxon>
        <taxon>Deinococcales</taxon>
        <taxon>Deinococcaceae</taxon>
        <taxon>Deinococcus</taxon>
    </lineage>
</organism>
<gene>
    <name evidence="1" type="primary">pyrH</name>
    <name type="ordered locus">Dgeo_1047</name>
</gene>
<comment type="function">
    <text evidence="1">Catalyzes the reversible phosphorylation of UMP to UDP.</text>
</comment>
<comment type="catalytic activity">
    <reaction evidence="1">
        <text>UMP + ATP = UDP + ADP</text>
        <dbReference type="Rhea" id="RHEA:24400"/>
        <dbReference type="ChEBI" id="CHEBI:30616"/>
        <dbReference type="ChEBI" id="CHEBI:57865"/>
        <dbReference type="ChEBI" id="CHEBI:58223"/>
        <dbReference type="ChEBI" id="CHEBI:456216"/>
        <dbReference type="EC" id="2.7.4.22"/>
    </reaction>
</comment>
<comment type="activity regulation">
    <text evidence="1">Allosterically activated by GTP. Inhibited by UTP.</text>
</comment>
<comment type="pathway">
    <text evidence="1">Pyrimidine metabolism; CTP biosynthesis via de novo pathway; UDP from UMP (UMPK route): step 1/1.</text>
</comment>
<comment type="subunit">
    <text evidence="1">Homohexamer.</text>
</comment>
<comment type="subcellular location">
    <subcellularLocation>
        <location evidence="1">Cytoplasm</location>
    </subcellularLocation>
</comment>
<comment type="similarity">
    <text evidence="1">Belongs to the UMP kinase family.</text>
</comment>
<evidence type="ECO:0000255" key="1">
    <source>
        <dbReference type="HAMAP-Rule" id="MF_01220"/>
    </source>
</evidence>
<reference key="1">
    <citation type="submission" date="2006-04" db="EMBL/GenBank/DDBJ databases">
        <title>Complete sequence of chromosome of Deinococcus geothermalis DSM 11300.</title>
        <authorList>
            <person name="Copeland A."/>
            <person name="Lucas S."/>
            <person name="Lapidus A."/>
            <person name="Barry K."/>
            <person name="Detter J.C."/>
            <person name="Glavina del Rio T."/>
            <person name="Hammon N."/>
            <person name="Israni S."/>
            <person name="Dalin E."/>
            <person name="Tice H."/>
            <person name="Pitluck S."/>
            <person name="Brettin T."/>
            <person name="Bruce D."/>
            <person name="Han C."/>
            <person name="Tapia R."/>
            <person name="Saunders E."/>
            <person name="Gilna P."/>
            <person name="Schmutz J."/>
            <person name="Larimer F."/>
            <person name="Land M."/>
            <person name="Hauser L."/>
            <person name="Kyrpides N."/>
            <person name="Kim E."/>
            <person name="Daly M.J."/>
            <person name="Fredrickson J.K."/>
            <person name="Makarova K.S."/>
            <person name="Gaidamakova E.K."/>
            <person name="Zhai M."/>
            <person name="Richardson P."/>
        </authorList>
    </citation>
    <scope>NUCLEOTIDE SEQUENCE [LARGE SCALE GENOMIC DNA]</scope>
    <source>
        <strain>DSM 11300 / CIP 105573 / AG-3a</strain>
    </source>
</reference>
<dbReference type="EC" id="2.7.4.22" evidence="1"/>
<dbReference type="EMBL" id="CP000359">
    <property type="protein sequence ID" value="ABF45346.1"/>
    <property type="molecule type" value="Genomic_DNA"/>
</dbReference>
<dbReference type="RefSeq" id="WP_011530183.1">
    <property type="nucleotide sequence ID" value="NC_008025.1"/>
</dbReference>
<dbReference type="SMR" id="Q1IZI8"/>
<dbReference type="STRING" id="319795.Dgeo_1047"/>
<dbReference type="KEGG" id="dge:Dgeo_1047"/>
<dbReference type="eggNOG" id="COG0528">
    <property type="taxonomic scope" value="Bacteria"/>
</dbReference>
<dbReference type="HOGENOM" id="CLU_033861_0_0_0"/>
<dbReference type="UniPathway" id="UPA00159">
    <property type="reaction ID" value="UER00275"/>
</dbReference>
<dbReference type="Proteomes" id="UP000002431">
    <property type="component" value="Chromosome"/>
</dbReference>
<dbReference type="GO" id="GO:0005737">
    <property type="term" value="C:cytoplasm"/>
    <property type="evidence" value="ECO:0007669"/>
    <property type="project" value="UniProtKB-SubCell"/>
</dbReference>
<dbReference type="GO" id="GO:0005524">
    <property type="term" value="F:ATP binding"/>
    <property type="evidence" value="ECO:0007669"/>
    <property type="project" value="UniProtKB-KW"/>
</dbReference>
<dbReference type="GO" id="GO:0033862">
    <property type="term" value="F:UMP kinase activity"/>
    <property type="evidence" value="ECO:0007669"/>
    <property type="project" value="UniProtKB-EC"/>
</dbReference>
<dbReference type="GO" id="GO:0044210">
    <property type="term" value="P:'de novo' CTP biosynthetic process"/>
    <property type="evidence" value="ECO:0007669"/>
    <property type="project" value="UniProtKB-UniRule"/>
</dbReference>
<dbReference type="GO" id="GO:0006225">
    <property type="term" value="P:UDP biosynthetic process"/>
    <property type="evidence" value="ECO:0007669"/>
    <property type="project" value="TreeGrafter"/>
</dbReference>
<dbReference type="CDD" id="cd04254">
    <property type="entry name" value="AAK_UMPK-PyrH-Ec"/>
    <property type="match status" value="1"/>
</dbReference>
<dbReference type="FunFam" id="3.40.1160.10:FF:000001">
    <property type="entry name" value="Uridylate kinase"/>
    <property type="match status" value="1"/>
</dbReference>
<dbReference type="Gene3D" id="3.40.1160.10">
    <property type="entry name" value="Acetylglutamate kinase-like"/>
    <property type="match status" value="1"/>
</dbReference>
<dbReference type="HAMAP" id="MF_01220_B">
    <property type="entry name" value="PyrH_B"/>
    <property type="match status" value="1"/>
</dbReference>
<dbReference type="InterPro" id="IPR036393">
    <property type="entry name" value="AceGlu_kinase-like_sf"/>
</dbReference>
<dbReference type="InterPro" id="IPR001048">
    <property type="entry name" value="Asp/Glu/Uridylate_kinase"/>
</dbReference>
<dbReference type="InterPro" id="IPR011817">
    <property type="entry name" value="Uridylate_kinase"/>
</dbReference>
<dbReference type="InterPro" id="IPR015963">
    <property type="entry name" value="Uridylate_kinase_bac"/>
</dbReference>
<dbReference type="NCBIfam" id="TIGR02075">
    <property type="entry name" value="pyrH_bact"/>
    <property type="match status" value="1"/>
</dbReference>
<dbReference type="PANTHER" id="PTHR42833">
    <property type="entry name" value="URIDYLATE KINASE"/>
    <property type="match status" value="1"/>
</dbReference>
<dbReference type="PANTHER" id="PTHR42833:SF4">
    <property type="entry name" value="URIDYLATE KINASE PUMPKIN, CHLOROPLASTIC"/>
    <property type="match status" value="1"/>
</dbReference>
<dbReference type="Pfam" id="PF00696">
    <property type="entry name" value="AA_kinase"/>
    <property type="match status" value="1"/>
</dbReference>
<dbReference type="PIRSF" id="PIRSF005650">
    <property type="entry name" value="Uridylate_kin"/>
    <property type="match status" value="1"/>
</dbReference>
<dbReference type="SUPFAM" id="SSF53633">
    <property type="entry name" value="Carbamate kinase-like"/>
    <property type="match status" value="1"/>
</dbReference>